<proteinExistence type="evidence at transcript level"/>
<evidence type="ECO:0000250" key="1"/>
<evidence type="ECO:0000250" key="2">
    <source>
        <dbReference type="UniProtKB" id="Q99280"/>
    </source>
</evidence>
<evidence type="ECO:0000255" key="3"/>
<evidence type="ECO:0000255" key="4">
    <source>
        <dbReference type="PROSITE-ProRule" id="PRU00099"/>
    </source>
</evidence>
<evidence type="ECO:0000305" key="5"/>
<name>CY42_TRYBB</name>
<keyword id="KW-0067">ATP-binding</keyword>
<keyword id="KW-0115">cAMP biosynthesis</keyword>
<keyword id="KW-1003">Cell membrane</keyword>
<keyword id="KW-0325">Glycoprotein</keyword>
<keyword id="KW-0456">Lyase</keyword>
<keyword id="KW-0460">Magnesium</keyword>
<keyword id="KW-0472">Membrane</keyword>
<keyword id="KW-0479">Metal-binding</keyword>
<keyword id="KW-0547">Nucleotide-binding</keyword>
<keyword id="KW-0675">Receptor</keyword>
<keyword id="KW-0812">Transmembrane</keyword>
<keyword id="KW-1133">Transmembrane helix</keyword>
<dbReference type="EC" id="4.6.1.1"/>
<dbReference type="EMBL" id="X52120">
    <property type="protein sequence ID" value="CAA36365.1"/>
    <property type="molecule type" value="mRNA"/>
</dbReference>
<dbReference type="PIR" id="S14200">
    <property type="entry name" value="S14200"/>
</dbReference>
<dbReference type="SMR" id="Q99396"/>
<dbReference type="GlyCosmos" id="Q99396">
    <property type="glycosylation" value="3 sites, No reported glycans"/>
</dbReference>
<dbReference type="GO" id="GO:0005886">
    <property type="term" value="C:plasma membrane"/>
    <property type="evidence" value="ECO:0007669"/>
    <property type="project" value="UniProtKB-SubCell"/>
</dbReference>
<dbReference type="GO" id="GO:0004016">
    <property type="term" value="F:adenylate cyclase activity"/>
    <property type="evidence" value="ECO:0007669"/>
    <property type="project" value="UniProtKB-EC"/>
</dbReference>
<dbReference type="GO" id="GO:0005524">
    <property type="term" value="F:ATP binding"/>
    <property type="evidence" value="ECO:0007669"/>
    <property type="project" value="UniProtKB-KW"/>
</dbReference>
<dbReference type="GO" id="GO:0046872">
    <property type="term" value="F:metal ion binding"/>
    <property type="evidence" value="ECO:0007669"/>
    <property type="project" value="UniProtKB-KW"/>
</dbReference>
<dbReference type="GO" id="GO:0006171">
    <property type="term" value="P:cAMP biosynthetic process"/>
    <property type="evidence" value="ECO:0007669"/>
    <property type="project" value="UniProtKB-KW"/>
</dbReference>
<dbReference type="GO" id="GO:0035556">
    <property type="term" value="P:intracellular signal transduction"/>
    <property type="evidence" value="ECO:0007669"/>
    <property type="project" value="InterPro"/>
</dbReference>
<dbReference type="CDD" id="cd07556">
    <property type="entry name" value="Nucleotidyl_cyc_III"/>
    <property type="match status" value="1"/>
</dbReference>
<dbReference type="FunFam" id="3.30.70.1230:FF:000022">
    <property type="entry name" value="Receptor-type adenylate cyclase GRESAG 4, putative"/>
    <property type="match status" value="1"/>
</dbReference>
<dbReference type="Gene3D" id="3.30.70.1230">
    <property type="entry name" value="Nucleotide cyclase"/>
    <property type="match status" value="1"/>
</dbReference>
<dbReference type="InterPro" id="IPR001054">
    <property type="entry name" value="A/G_cyclase"/>
</dbReference>
<dbReference type="InterPro" id="IPR050697">
    <property type="entry name" value="Adenylyl/Guanylyl_Cyclase_3/4"/>
</dbReference>
<dbReference type="InterPro" id="IPR029787">
    <property type="entry name" value="Nucleotide_cyclase"/>
</dbReference>
<dbReference type="PANTHER" id="PTHR43081:SF1">
    <property type="entry name" value="ADENYLATE CYCLASE, TERMINAL-DIFFERENTIATION SPECIFIC"/>
    <property type="match status" value="1"/>
</dbReference>
<dbReference type="PANTHER" id="PTHR43081">
    <property type="entry name" value="ADENYLATE CYCLASE, TERMINAL-DIFFERENTIATION SPECIFIC-RELATED"/>
    <property type="match status" value="1"/>
</dbReference>
<dbReference type="Pfam" id="PF00211">
    <property type="entry name" value="Guanylate_cyc"/>
    <property type="match status" value="1"/>
</dbReference>
<dbReference type="Pfam" id="PF25493">
    <property type="entry name" value="Peripla_BP_A-cyclase"/>
    <property type="match status" value="1"/>
</dbReference>
<dbReference type="SMART" id="SM00044">
    <property type="entry name" value="CYCc"/>
    <property type="match status" value="1"/>
</dbReference>
<dbReference type="SUPFAM" id="SSF55073">
    <property type="entry name" value="Nucleotide cyclase"/>
    <property type="match status" value="1"/>
</dbReference>
<dbReference type="PROSITE" id="PS50125">
    <property type="entry name" value="GUANYLATE_CYCLASE_2"/>
    <property type="match status" value="1"/>
</dbReference>
<gene>
    <name type="primary">GRESAG 4.2</name>
</gene>
<protein>
    <recommendedName>
        <fullName>Receptor-type adenylate cyclase GRESAG 4.2</fullName>
        <ecNumber>4.6.1.1</ecNumber>
    </recommendedName>
    <alternativeName>
        <fullName>ATP pyrophosphate-lyase</fullName>
    </alternativeName>
    <alternativeName>
        <fullName>Adenylyl cyclase</fullName>
    </alternativeName>
</protein>
<sequence>RKTLLTFGLNLSSSVVLTPGDSVGEHLPKSGITFIIGLVVDDIVVIEEHLRIHTKARVLVQFSDIALLYNEFVQAFNNSDGAKHLLFATSLPHWADVDTTSETVRRFHEAVPEVEKWTPLSLLGFATGRLMQRNLQRMDLATSDLLSGLFFNETFITVDDMQYGAYKDAEGVATAEESLSNFGATDISVWSMARALRSDEPVLQDPMSPSMVYTVPNGNALTPAQLDWCGWCRFACADTGSRLTVFLCCIMRNKRDNDNAPKELADPVTLIFTDIESSTAQWATQPELMPDAVATHHSMVRSLIENYDCYEVKTVGDSFMIACKSPFAAVQLAQELQLRFLRLDWGTTVFDEFYREFEERHAEEGDGKYKPPTARLDPEVYRQLWNGLRVRVGIHTGLCDIRYDEVTKGYDYYGQTANTAARTESVGNGGQVLMTCETYHSLSTAERSQFDVTPLGGVPLRGVSEPVEVYQLNAVPGRSFAELRLDRVLDVLDIFGEGTAASTSDYSSTLAELSETAQAIAVSLQSLMGVFTQAQRQGTLMPFCERWRVRCPRKVHPRGTTATVRRLSVALQ</sequence>
<accession>Q99396</accession>
<organism>
    <name type="scientific">Trypanosoma brucei brucei</name>
    <dbReference type="NCBI Taxonomy" id="5702"/>
    <lineage>
        <taxon>Eukaryota</taxon>
        <taxon>Discoba</taxon>
        <taxon>Euglenozoa</taxon>
        <taxon>Kinetoplastea</taxon>
        <taxon>Metakinetoplastina</taxon>
        <taxon>Trypanosomatida</taxon>
        <taxon>Trypanosomatidae</taxon>
        <taxon>Trypanosoma</taxon>
    </lineage>
</organism>
<reference key="1">
    <citation type="journal article" date="1990" name="Mol. Biochem. Parasitol.">
        <title>Differential expression of a family of putative adenylate/guanylate cyclase genes in Trypanosoma brucei.</title>
        <authorList>
            <person name="Alexandre S."/>
            <person name="Paindavione P."/>
            <person name="Tebabi P."/>
            <person name="Pays A."/>
            <person name="Halleux S."/>
            <person name="Steinert M."/>
            <person name="Pays E."/>
        </authorList>
    </citation>
    <scope>NUCLEOTIDE SEQUENCE [MRNA]</scope>
    <source>
        <strain>EATRO 1125</strain>
    </source>
</reference>
<feature type="chain" id="PRO_0000195738" description="Receptor-type adenylate cyclase GRESAG 4.2">
    <location>
        <begin position="1" status="less than"/>
        <end position="572"/>
    </location>
</feature>
<feature type="topological domain" description="Extracellular" evidence="3">
    <location>
        <begin position="1" status="less than"/>
        <end position="225"/>
    </location>
</feature>
<feature type="transmembrane region" description="Helical" evidence="3">
    <location>
        <begin position="226"/>
        <end position="251"/>
    </location>
</feature>
<feature type="topological domain" description="Cytoplasmic" evidence="3">
    <location>
        <begin position="252"/>
        <end position="572"/>
    </location>
</feature>
<feature type="domain" description="Guanylate cyclase" evidence="4">
    <location>
        <begin position="269"/>
        <end position="424"/>
    </location>
</feature>
<feature type="binding site" evidence="2">
    <location>
        <position position="274"/>
    </location>
    <ligand>
        <name>Mg(2+)</name>
        <dbReference type="ChEBI" id="CHEBI:18420"/>
    </ligand>
</feature>
<feature type="binding site" evidence="2">
    <location>
        <position position="317"/>
    </location>
    <ligand>
        <name>Mg(2+)</name>
        <dbReference type="ChEBI" id="CHEBI:18420"/>
    </ligand>
</feature>
<feature type="glycosylation site" description="N-linked (GlcNAc...) asparagine" evidence="3">
    <location>
        <position position="10"/>
    </location>
</feature>
<feature type="glycosylation site" description="N-linked (GlcNAc...) asparagine" evidence="3">
    <location>
        <position position="77"/>
    </location>
</feature>
<feature type="glycosylation site" description="N-linked (GlcNAc...) asparagine" evidence="3">
    <location>
        <position position="152"/>
    </location>
</feature>
<feature type="non-terminal residue">
    <location>
        <position position="1"/>
    </location>
</feature>
<comment type="function">
    <text>Could act as a receptor for an unknown ligand.</text>
</comment>
<comment type="catalytic activity">
    <reaction>
        <text>ATP = 3',5'-cyclic AMP + diphosphate</text>
        <dbReference type="Rhea" id="RHEA:15389"/>
        <dbReference type="ChEBI" id="CHEBI:30616"/>
        <dbReference type="ChEBI" id="CHEBI:33019"/>
        <dbReference type="ChEBI" id="CHEBI:58165"/>
        <dbReference type="EC" id="4.6.1.1"/>
    </reaction>
</comment>
<comment type="cofactor">
    <cofactor evidence="1">
        <name>Mg(2+)</name>
        <dbReference type="ChEBI" id="CHEBI:18420"/>
    </cofactor>
    <text evidence="1">Binds 1 Mg(2+) ion per subunit.</text>
</comment>
<comment type="subcellular location">
    <subcellularLocation>
        <location evidence="1">Cell membrane</location>
        <topology evidence="1">Multi-pass membrane protein</topology>
    </subcellularLocation>
</comment>
<comment type="similarity">
    <text evidence="5">Belongs to the adenylyl cyclase class-3 family.</text>
</comment>